<comment type="function">
    <text evidence="4 7">Cooperates for the ATP-dependent vacuolar transport of bilirubin and glutathione conjugates.</text>
</comment>
<comment type="catalytic activity">
    <reaction evidence="7">
        <text>Cd(2+)(in) + ATP + H2O = Cd(2+)(out) + ADP + phosphate + H(+)</text>
        <dbReference type="Rhea" id="RHEA:12132"/>
        <dbReference type="ChEBI" id="CHEBI:15377"/>
        <dbReference type="ChEBI" id="CHEBI:15378"/>
        <dbReference type="ChEBI" id="CHEBI:30616"/>
        <dbReference type="ChEBI" id="CHEBI:43474"/>
        <dbReference type="ChEBI" id="CHEBI:48775"/>
        <dbReference type="ChEBI" id="CHEBI:456216"/>
        <dbReference type="EC" id="7.2.2.2"/>
    </reaction>
</comment>
<comment type="catalytic activity">
    <reaction evidence="7">
        <text>an S-substituted glutathione(in) + ATP + H2O = an S-substituted glutathione(out) + ADP + phosphate + H(+)</text>
        <dbReference type="Rhea" id="RHEA:19121"/>
        <dbReference type="ChEBI" id="CHEBI:15377"/>
        <dbReference type="ChEBI" id="CHEBI:15378"/>
        <dbReference type="ChEBI" id="CHEBI:30616"/>
        <dbReference type="ChEBI" id="CHEBI:43474"/>
        <dbReference type="ChEBI" id="CHEBI:90779"/>
        <dbReference type="ChEBI" id="CHEBI:456216"/>
        <dbReference type="EC" id="7.6.2.3"/>
    </reaction>
</comment>
<comment type="interaction">
    <interactant intactId="EBI-21779">
        <id>P39109</id>
    </interactant>
    <interactant intactId="EBI-2218">
        <id>P00330</id>
        <label>ADH1</label>
    </interactant>
    <organismsDiffer>false</organismsDiffer>
    <experiments>2</experiments>
</comment>
<comment type="interaction">
    <interactant intactId="EBI-21779">
        <id>P39109</id>
    </interactant>
    <interactant intactId="EBI-4853">
        <id>Q03048</id>
        <label>COF1</label>
    </interactant>
    <organismsDiffer>false</organismsDiffer>
    <experiments>2</experiments>
</comment>
<comment type="interaction">
    <interactant intactId="EBI-21779">
        <id>P39109</id>
    </interactant>
    <interactant intactId="EBI-14838">
        <id>P01120</id>
        <label>RAS2</label>
    </interactant>
    <organismsDiffer>false</organismsDiffer>
    <experiments>2</experiments>
</comment>
<comment type="subcellular location">
    <subcellularLocation>
        <location evidence="7">Vacuole membrane</location>
        <topology evidence="3 7">Multi-pass membrane protein</topology>
    </subcellularLocation>
</comment>
<comment type="miscellaneous">
    <text evidence="5">Present with 396 molecules/cell in log phase SD medium.</text>
</comment>
<comment type="similarity">
    <text evidence="8">Belongs to the ABC transporter superfamily. ABCC family. Conjugate transporter (TC 3.A.1.208) subfamily.</text>
</comment>
<keyword id="KW-0002">3D-structure</keyword>
<keyword id="KW-0067">ATP-binding</keyword>
<keyword id="KW-0105">Cadmium resistance</keyword>
<keyword id="KW-0472">Membrane</keyword>
<keyword id="KW-0547">Nucleotide-binding</keyword>
<keyword id="KW-0597">Phosphoprotein</keyword>
<keyword id="KW-1185">Reference proteome</keyword>
<keyword id="KW-0677">Repeat</keyword>
<keyword id="KW-1278">Translocase</keyword>
<keyword id="KW-0812">Transmembrane</keyword>
<keyword id="KW-1133">Transmembrane helix</keyword>
<keyword id="KW-0813">Transport</keyword>
<keyword id="KW-0926">Vacuole</keyword>
<gene>
    <name type="primary">YCF1</name>
    <name type="ordered locus">YDR135C</name>
    <name type="ORF">YD9302.11C</name>
</gene>
<organism>
    <name type="scientific">Saccharomyces cerevisiae (strain ATCC 204508 / S288c)</name>
    <name type="common">Baker's yeast</name>
    <dbReference type="NCBI Taxonomy" id="559292"/>
    <lineage>
        <taxon>Eukaryota</taxon>
        <taxon>Fungi</taxon>
        <taxon>Dikarya</taxon>
        <taxon>Ascomycota</taxon>
        <taxon>Saccharomycotina</taxon>
        <taxon>Saccharomycetes</taxon>
        <taxon>Saccharomycetales</taxon>
        <taxon>Saccharomycetaceae</taxon>
        <taxon>Saccharomyces</taxon>
    </lineage>
</organism>
<dbReference type="EC" id="7.2.2.2" evidence="7"/>
<dbReference type="EC" id="7.6.2.3" evidence="7"/>
<dbReference type="EMBL" id="L35237">
    <property type="protein sequence ID" value="AAA50353.1"/>
    <property type="molecule type" value="Genomic_DNA"/>
</dbReference>
<dbReference type="EMBL" id="Z48179">
    <property type="protein sequence ID" value="CAA88217.1"/>
    <property type="molecule type" value="Genomic_DNA"/>
</dbReference>
<dbReference type="EMBL" id="BK006938">
    <property type="protein sequence ID" value="DAA11979.1"/>
    <property type="molecule type" value="Genomic_DNA"/>
</dbReference>
<dbReference type="PIR" id="S51863">
    <property type="entry name" value="S51863"/>
</dbReference>
<dbReference type="RefSeq" id="NP_010419.3">
    <property type="nucleotide sequence ID" value="NM_001180442.3"/>
</dbReference>
<dbReference type="PDB" id="7M68">
    <property type="method" value="EM"/>
    <property type="resolution" value="4.04 A"/>
    <property type="chains" value="A=1-1515"/>
</dbReference>
<dbReference type="PDB" id="7M69">
    <property type="method" value="EM"/>
    <property type="resolution" value="3.42 A"/>
    <property type="chains" value="A=1-1515"/>
</dbReference>
<dbReference type="PDB" id="7MPE">
    <property type="method" value="EM"/>
    <property type="resolution" value="3.20 A"/>
    <property type="chains" value="A=1-1515"/>
</dbReference>
<dbReference type="PDB" id="8SG4">
    <property type="method" value="EM"/>
    <property type="resolution" value="3.11 A"/>
    <property type="chains" value="A=1-1515"/>
</dbReference>
<dbReference type="PDB" id="8SQ0">
    <property type="method" value="EM"/>
    <property type="resolution" value="3.20 A"/>
    <property type="chains" value="A/B=1-1515"/>
</dbReference>
<dbReference type="PDB" id="8SQL">
    <property type="method" value="EM"/>
    <property type="resolution" value="3.10 A"/>
    <property type="chains" value="A=1-1515"/>
</dbReference>
<dbReference type="PDB" id="8SQM">
    <property type="method" value="EM"/>
    <property type="resolution" value="3.40 A"/>
    <property type="chains" value="A=1-1515"/>
</dbReference>
<dbReference type="PDB" id="9AYC">
    <property type="method" value="EM"/>
    <property type="resolution" value="3.23 A"/>
    <property type="chains" value="A=1-1515"/>
</dbReference>
<dbReference type="PDBsum" id="7M68"/>
<dbReference type="PDBsum" id="7M69"/>
<dbReference type="PDBsum" id="7MPE"/>
<dbReference type="PDBsum" id="8SG4"/>
<dbReference type="PDBsum" id="8SQ0"/>
<dbReference type="PDBsum" id="8SQL"/>
<dbReference type="PDBsum" id="8SQM"/>
<dbReference type="PDBsum" id="9AYC"/>
<dbReference type="EMDB" id="EMD-23690"/>
<dbReference type="EMDB" id="EMD-23691"/>
<dbReference type="EMDB" id="EMD-23932"/>
<dbReference type="EMDB" id="EMD-40451"/>
<dbReference type="EMDB" id="EMD-40692"/>
<dbReference type="EMDB" id="EMD-40709"/>
<dbReference type="EMDB" id="EMD-40710"/>
<dbReference type="EMDB" id="EMD-43985"/>
<dbReference type="SMR" id="P39109"/>
<dbReference type="BioGRID" id="32190">
    <property type="interactions" value="148"/>
</dbReference>
<dbReference type="DIP" id="DIP-2612N"/>
<dbReference type="FunCoup" id="P39109">
    <property type="interactions" value="399"/>
</dbReference>
<dbReference type="IntAct" id="P39109">
    <property type="interactions" value="60"/>
</dbReference>
<dbReference type="MINT" id="P39109"/>
<dbReference type="STRING" id="4932.YDR135C"/>
<dbReference type="TCDB" id="3.A.1.208.11">
    <property type="family name" value="the atp-binding cassette (abc) superfamily"/>
</dbReference>
<dbReference type="iPTMnet" id="P39109"/>
<dbReference type="PaxDb" id="4932-YDR135C"/>
<dbReference type="PeptideAtlas" id="P39109"/>
<dbReference type="EnsemblFungi" id="YDR135C_mRNA">
    <property type="protein sequence ID" value="YDR135C"/>
    <property type="gene ID" value="YDR135C"/>
</dbReference>
<dbReference type="GeneID" id="851713"/>
<dbReference type="KEGG" id="sce:YDR135C"/>
<dbReference type="AGR" id="SGD:S000002542"/>
<dbReference type="SGD" id="S000002542">
    <property type="gene designation" value="YCF1"/>
</dbReference>
<dbReference type="VEuPathDB" id="FungiDB:YDR135C"/>
<dbReference type="eggNOG" id="KOG0054">
    <property type="taxonomic scope" value="Eukaryota"/>
</dbReference>
<dbReference type="GeneTree" id="ENSGT00940000166156"/>
<dbReference type="HOGENOM" id="CLU_000604_27_3_1"/>
<dbReference type="InParanoid" id="P39109"/>
<dbReference type="OMA" id="CFETGMR"/>
<dbReference type="OrthoDB" id="6500128at2759"/>
<dbReference type="BioCyc" id="MetaCyc:G3O-29733-MONOMER"/>
<dbReference type="BioCyc" id="YEAST:G3O-29733-MONOMER"/>
<dbReference type="BRENDA" id="7.2.2.2">
    <property type="organism ID" value="984"/>
</dbReference>
<dbReference type="BRENDA" id="7.6.2.3">
    <property type="organism ID" value="984"/>
</dbReference>
<dbReference type="Reactome" id="R-SCE-159418">
    <property type="pathway name" value="Recycling of bile acids and salts"/>
</dbReference>
<dbReference type="Reactome" id="R-SCE-189483">
    <property type="pathway name" value="Heme degradation"/>
</dbReference>
<dbReference type="Reactome" id="R-SCE-382556">
    <property type="pathway name" value="ABC-family proteins mediated transport"/>
</dbReference>
<dbReference type="Reactome" id="R-SCE-9749641">
    <property type="pathway name" value="Aspirin ADME"/>
</dbReference>
<dbReference type="Reactome" id="R-SCE-9753281">
    <property type="pathway name" value="Paracetamol ADME"/>
</dbReference>
<dbReference type="Reactome" id="R-SCE-9754706">
    <property type="pathway name" value="Atorvastatin ADME"/>
</dbReference>
<dbReference type="BioGRID-ORCS" id="851713">
    <property type="hits" value="0 hits in 10 CRISPR screens"/>
</dbReference>
<dbReference type="PRO" id="PR:P39109"/>
<dbReference type="Proteomes" id="UP000002311">
    <property type="component" value="Chromosome IV"/>
</dbReference>
<dbReference type="RNAct" id="P39109">
    <property type="molecule type" value="protein"/>
</dbReference>
<dbReference type="GO" id="GO:0000324">
    <property type="term" value="C:fungal-type vacuole"/>
    <property type="evidence" value="ECO:0000318"/>
    <property type="project" value="GO_Central"/>
</dbReference>
<dbReference type="GO" id="GO:0000329">
    <property type="term" value="C:fungal-type vacuole membrane"/>
    <property type="evidence" value="ECO:0000314"/>
    <property type="project" value="SGD"/>
</dbReference>
<dbReference type="GO" id="GO:0016020">
    <property type="term" value="C:membrane"/>
    <property type="evidence" value="ECO:0000318"/>
    <property type="project" value="GO_Central"/>
</dbReference>
<dbReference type="GO" id="GO:0045121">
    <property type="term" value="C:membrane raft"/>
    <property type="evidence" value="ECO:0000314"/>
    <property type="project" value="SGD"/>
</dbReference>
<dbReference type="GO" id="GO:0015434">
    <property type="term" value="F:ABC-type cadmium transporter activity"/>
    <property type="evidence" value="ECO:0007669"/>
    <property type="project" value="UniProtKB-EC"/>
</dbReference>
<dbReference type="GO" id="GO:0015431">
    <property type="term" value="F:ABC-type glutathione S-conjugate transporter activity"/>
    <property type="evidence" value="ECO:0000314"/>
    <property type="project" value="SGD"/>
</dbReference>
<dbReference type="GO" id="GO:0005524">
    <property type="term" value="F:ATP binding"/>
    <property type="evidence" value="ECO:0007669"/>
    <property type="project" value="UniProtKB-KW"/>
</dbReference>
<dbReference type="GO" id="GO:0016887">
    <property type="term" value="F:ATP hydrolysis activity"/>
    <property type="evidence" value="ECO:0007669"/>
    <property type="project" value="InterPro"/>
</dbReference>
<dbReference type="GO" id="GO:0042626">
    <property type="term" value="F:ATPase-coupled transmembrane transporter activity"/>
    <property type="evidence" value="ECO:0000318"/>
    <property type="project" value="GO_Central"/>
</dbReference>
<dbReference type="GO" id="GO:0015127">
    <property type="term" value="F:bilirubin transmembrane transporter activity"/>
    <property type="evidence" value="ECO:0000315"/>
    <property type="project" value="SGD"/>
</dbReference>
<dbReference type="GO" id="GO:0008551">
    <property type="term" value="F:P-type cadmium transporter activity"/>
    <property type="evidence" value="ECO:0007669"/>
    <property type="project" value="RHEA"/>
</dbReference>
<dbReference type="GO" id="GO:0015723">
    <property type="term" value="P:bilirubin transport"/>
    <property type="evidence" value="ECO:0000315"/>
    <property type="project" value="SGD"/>
</dbReference>
<dbReference type="GO" id="GO:0045454">
    <property type="term" value="P:cell redox homeostasis"/>
    <property type="evidence" value="ECO:0000315"/>
    <property type="project" value="SGD"/>
</dbReference>
<dbReference type="GO" id="GO:0006749">
    <property type="term" value="P:glutathione metabolic process"/>
    <property type="evidence" value="ECO:0000316"/>
    <property type="project" value="SGD"/>
</dbReference>
<dbReference type="GO" id="GO:0046686">
    <property type="term" value="P:response to cadmium ion"/>
    <property type="evidence" value="ECO:0007669"/>
    <property type="project" value="UniProtKB-KW"/>
</dbReference>
<dbReference type="GO" id="GO:0010038">
    <property type="term" value="P:response to metal ion"/>
    <property type="evidence" value="ECO:0000314"/>
    <property type="project" value="SGD"/>
</dbReference>
<dbReference type="GO" id="GO:0055085">
    <property type="term" value="P:transmembrane transport"/>
    <property type="evidence" value="ECO:0000315"/>
    <property type="project" value="SGD"/>
</dbReference>
<dbReference type="GO" id="GO:0042144">
    <property type="term" value="P:vacuole fusion, non-autophagic"/>
    <property type="evidence" value="ECO:0000315"/>
    <property type="project" value="SGD"/>
</dbReference>
<dbReference type="CDD" id="cd18595">
    <property type="entry name" value="ABC_6TM_MRP1_2_3_6_D1_like"/>
    <property type="match status" value="1"/>
</dbReference>
<dbReference type="CDD" id="cd18603">
    <property type="entry name" value="ABC_6TM_MRP1_2_3_6_D2_like"/>
    <property type="match status" value="1"/>
</dbReference>
<dbReference type="CDD" id="cd03250">
    <property type="entry name" value="ABCC_MRP_domain1"/>
    <property type="match status" value="1"/>
</dbReference>
<dbReference type="CDD" id="cd03244">
    <property type="entry name" value="ABCC_MRP_domain2"/>
    <property type="match status" value="1"/>
</dbReference>
<dbReference type="FunFam" id="3.40.50.300:FF:000565">
    <property type="entry name" value="ABC bile acid transporter"/>
    <property type="match status" value="1"/>
</dbReference>
<dbReference type="FunFam" id="1.20.1560.10:FF:000020">
    <property type="entry name" value="ABC metal ion transporter"/>
    <property type="match status" value="1"/>
</dbReference>
<dbReference type="FunFam" id="3.40.50.300:FF:000450">
    <property type="entry name" value="ABC transporter C family member 2"/>
    <property type="match status" value="1"/>
</dbReference>
<dbReference type="FunFam" id="1.20.1560.10:FF:000001">
    <property type="entry name" value="ATP-binding cassette subfamily C member 1"/>
    <property type="match status" value="1"/>
</dbReference>
<dbReference type="Gene3D" id="1.20.1560.10">
    <property type="entry name" value="ABC transporter type 1, transmembrane domain"/>
    <property type="match status" value="2"/>
</dbReference>
<dbReference type="Gene3D" id="3.40.50.300">
    <property type="entry name" value="P-loop containing nucleotide triphosphate hydrolases"/>
    <property type="match status" value="2"/>
</dbReference>
<dbReference type="InterPro" id="IPR003593">
    <property type="entry name" value="AAA+_ATPase"/>
</dbReference>
<dbReference type="InterPro" id="IPR011527">
    <property type="entry name" value="ABC1_TM_dom"/>
</dbReference>
<dbReference type="InterPro" id="IPR036640">
    <property type="entry name" value="ABC1_TM_sf"/>
</dbReference>
<dbReference type="InterPro" id="IPR003439">
    <property type="entry name" value="ABC_transporter-like_ATP-bd"/>
</dbReference>
<dbReference type="InterPro" id="IPR017871">
    <property type="entry name" value="ABC_transporter-like_CS"/>
</dbReference>
<dbReference type="InterPro" id="IPR050173">
    <property type="entry name" value="ABC_transporter_C-like"/>
</dbReference>
<dbReference type="InterPro" id="IPR027417">
    <property type="entry name" value="P-loop_NTPase"/>
</dbReference>
<dbReference type="InterPro" id="IPR056227">
    <property type="entry name" value="TMD0_ABC"/>
</dbReference>
<dbReference type="PANTHER" id="PTHR24223">
    <property type="entry name" value="ATP-BINDING CASSETTE SUB-FAMILY C"/>
    <property type="match status" value="1"/>
</dbReference>
<dbReference type="PANTHER" id="PTHR24223:SF443">
    <property type="entry name" value="MULTIDRUG-RESISTANCE LIKE PROTEIN 1, ISOFORM I"/>
    <property type="match status" value="1"/>
</dbReference>
<dbReference type="Pfam" id="PF00664">
    <property type="entry name" value="ABC_membrane"/>
    <property type="match status" value="2"/>
</dbReference>
<dbReference type="Pfam" id="PF00005">
    <property type="entry name" value="ABC_tran"/>
    <property type="match status" value="2"/>
</dbReference>
<dbReference type="Pfam" id="PF24357">
    <property type="entry name" value="TMD0_ABC"/>
    <property type="match status" value="1"/>
</dbReference>
<dbReference type="SMART" id="SM00382">
    <property type="entry name" value="AAA"/>
    <property type="match status" value="2"/>
</dbReference>
<dbReference type="SUPFAM" id="SSF90123">
    <property type="entry name" value="ABC transporter transmembrane region"/>
    <property type="match status" value="2"/>
</dbReference>
<dbReference type="SUPFAM" id="SSF52540">
    <property type="entry name" value="P-loop containing nucleoside triphosphate hydrolases"/>
    <property type="match status" value="2"/>
</dbReference>
<dbReference type="PROSITE" id="PS50929">
    <property type="entry name" value="ABC_TM1F"/>
    <property type="match status" value="2"/>
</dbReference>
<dbReference type="PROSITE" id="PS00211">
    <property type="entry name" value="ABC_TRANSPORTER_1"/>
    <property type="match status" value="2"/>
</dbReference>
<dbReference type="PROSITE" id="PS50893">
    <property type="entry name" value="ABC_TRANSPORTER_2"/>
    <property type="match status" value="2"/>
</dbReference>
<proteinExistence type="evidence at protein level"/>
<evidence type="ECO:0000255" key="1"/>
<evidence type="ECO:0000255" key="2">
    <source>
        <dbReference type="PROSITE-ProRule" id="PRU00434"/>
    </source>
</evidence>
<evidence type="ECO:0000255" key="3">
    <source>
        <dbReference type="PROSITE-ProRule" id="PRU00441"/>
    </source>
</evidence>
<evidence type="ECO:0000269" key="4">
    <source>
    </source>
</evidence>
<evidence type="ECO:0000269" key="5">
    <source>
    </source>
</evidence>
<evidence type="ECO:0000269" key="6">
    <source>
    </source>
</evidence>
<evidence type="ECO:0000269" key="7">
    <source>
    </source>
</evidence>
<evidence type="ECO:0000305" key="8"/>
<evidence type="ECO:0007744" key="9">
    <source>
    </source>
</evidence>
<evidence type="ECO:0007744" key="10">
    <source>
    </source>
</evidence>
<evidence type="ECO:0007744" key="11">
    <source>
    </source>
</evidence>
<evidence type="ECO:0007744" key="12">
    <source>
    </source>
</evidence>
<evidence type="ECO:0007829" key="13">
    <source>
        <dbReference type="PDB" id="7M69"/>
    </source>
</evidence>
<evidence type="ECO:0007829" key="14">
    <source>
        <dbReference type="PDB" id="7MPE"/>
    </source>
</evidence>
<evidence type="ECO:0007829" key="15">
    <source>
        <dbReference type="PDB" id="8SG4"/>
    </source>
</evidence>
<evidence type="ECO:0007829" key="16">
    <source>
        <dbReference type="PDB" id="8SQ0"/>
    </source>
</evidence>
<evidence type="ECO:0007829" key="17">
    <source>
        <dbReference type="PDB" id="9AYC"/>
    </source>
</evidence>
<sequence length="1515" mass="171121">MAGNLVSWACKLCRSPEGFGPISFYGDFTQCFIDGVILNLSAIFMITFGIRDLVNLCKKKHSGIKYRRNWIIVSRMALVLLEIAFVSLASLNISKEEAENFTIVSQYASTMLSLFVALALHWIEYDRSVVANTVLLFYWLFETFGNFAKLINILIRHTYEGIWYSGQTGFILTLFQVITCASILLLEALPKKPLMPHQHIHQTLTRRKPNPYDSANIFSRITFSWMSGLMKTGYEKYLVEADLYKLPRNFSSEELSQKLEKNWENELKQKSNPSLSWAICRTFGSKMLLAAFFKAIHDVLAFTQPQLLRILIKFVTDYNSERQDDHSSLQGFENNHPQKLPIVRGFLIAFAMFLVGFTQTSVLHQYFLNVFNTGMYIKSALTALIYQKSLVLSNEASGLSSTGDIVNLMSVDVQKLQDLTQWLNLIWSGPFQIIICLYSLYKLLGNSMWVGVIILVIMMPLNSFLMRIQKKLQKSQMKYKDERTRVISEILNNIKSLKLYAWEKPYREKLEEVRNNKELKNLTKLGCYMAVTSFQFNIVPFLVSCCTFAVFVYTEDRALTTDLVFPALTLFNLLSFPLMIIPMVLNSFIEASVSIGRLFTFFTNEELQPDSVQRLPKVKNIGDVAINIGDDATFLWQRKPEYKVALKNINFQAKKGNLTCIVGKVGSGKTALLSCMLGDLFRVKGFATVHGSVAYVSQVPWIMNGTVKENILFGHRYDAEFYEKTIKACALTIDLAILMDGDKTLVGEKGISLSGGQKARLSLARAVYARADTYLLDDPLAAVDEHVARHLIEHVLGPNGLLHTKTKVLATNKVSALSIADSIALLDNGEITQQGTYDEITKDADSPLWKLLNNYGKKNNGKSNEFGDSSESSVRESSIPVEGELEQLQKLNDLDFGNSDAISLRRASDATLGSIDFGDDENIAKREHREQGKVKWNIYLEYAKACNPKSVCVFILFIVISMFLSVMGNVWLKHWSEVNSRYGSNPNAARYLAIYFALGIGSALATLIQTIVLWVFCTIHASKYLHNLMTNSVLRAPMTFFETTPIGRILNRFSNDIYKVDALLGRTFSQFFVNAVKVTFTITVICATTWQFIFIIIPLSVFYIYYQQYYLRTSRELRRLDSITRSPIYSHFQETLGGLATVRGYSQQKRFSHINQCRIDNNMSAFYPSINANRWLAYRLELIGSIIILGAATLSVFRLKQGTLTAGMVGLSLSYALQITQTLNWIVRMTVEVETNIVSVERIKEYADLKSEAPLIVEGHRPPKEWPSQGDIKFNNYSTRYRPELDLVLKHINIHIKPNEKVGIVGRTGAGKSSLTLALFRMIEASEGNIVIDNIAINEIGLYDLRHKLSIIPQDSQVFEGTVRENIDPINQYTDEAIWRALELSHLKEHVLSMSNDGLDAQLTEGGGNLSVGQRQLLCLARAMLVPSKILVLDEATAAVDVETDKVVQETIRTAFKDRTILTIAHRLNTIMDSDRIIVLDNGKVAEFDSPGQLLSDNKSLFYSLCMEAGLVNEN</sequence>
<protein>
    <recommendedName>
        <fullName>Metal resistance protein YCF1</fullName>
    </recommendedName>
    <alternativeName>
        <fullName>ABC-type Cd(2+) transporter</fullName>
        <ecNumber evidence="7">7.2.2.2</ecNumber>
    </alternativeName>
    <alternativeName>
        <fullName>ABC-type glutathione-S-conjugate transporter</fullName>
        <ecNumber evidence="7">7.6.2.3</ecNumber>
    </alternativeName>
    <alternativeName>
        <fullName>Yeast cadmium factor 1</fullName>
    </alternativeName>
</protein>
<accession>P39109</accession>
<accession>D6VSB9</accession>
<accession>Q03905</accession>
<name>YCFI_YEAST</name>
<reference key="1">
    <citation type="journal article" date="1994" name="J. Biol. Chem.">
        <title>A yeast metal resistance protein similar to human cystic fibrosis transmembrane conductance regulator (CFTR) and multidrug resistance-associated protein.</title>
        <authorList>
            <person name="Szczypka M.S."/>
            <person name="Wemmie J.A."/>
            <person name="Moye-Rowley S.W."/>
            <person name="Thiele D.J."/>
        </authorList>
    </citation>
    <scope>NUCLEOTIDE SEQUENCE [GENOMIC DNA]</scope>
    <scope>MUTAGENESIS OF PHE-713 AND SER-908</scope>
    <source>
        <strain>H9</strain>
    </source>
</reference>
<reference key="2">
    <citation type="journal article" date="1997" name="Nature">
        <title>The nucleotide sequence of Saccharomyces cerevisiae chromosome IV.</title>
        <authorList>
            <person name="Jacq C."/>
            <person name="Alt-Moerbe J."/>
            <person name="Andre B."/>
            <person name="Arnold W."/>
            <person name="Bahr A."/>
            <person name="Ballesta J.P.G."/>
            <person name="Bargues M."/>
            <person name="Baron L."/>
            <person name="Becker A."/>
            <person name="Biteau N."/>
            <person name="Bloecker H."/>
            <person name="Blugeon C."/>
            <person name="Boskovic J."/>
            <person name="Brandt P."/>
            <person name="Brueckner M."/>
            <person name="Buitrago M.J."/>
            <person name="Coster F."/>
            <person name="Delaveau T."/>
            <person name="del Rey F."/>
            <person name="Dujon B."/>
            <person name="Eide L.G."/>
            <person name="Garcia-Cantalejo J.M."/>
            <person name="Goffeau A."/>
            <person name="Gomez-Peris A."/>
            <person name="Granotier C."/>
            <person name="Hanemann V."/>
            <person name="Hankeln T."/>
            <person name="Hoheisel J.D."/>
            <person name="Jaeger W."/>
            <person name="Jimenez A."/>
            <person name="Jonniaux J.-L."/>
            <person name="Kraemer C."/>
            <person name="Kuester H."/>
            <person name="Laamanen P."/>
            <person name="Legros Y."/>
            <person name="Louis E.J."/>
            <person name="Moeller-Rieker S."/>
            <person name="Monnet A."/>
            <person name="Moro M."/>
            <person name="Mueller-Auer S."/>
            <person name="Nussbaumer B."/>
            <person name="Paricio N."/>
            <person name="Paulin L."/>
            <person name="Perea J."/>
            <person name="Perez-Alonso M."/>
            <person name="Perez-Ortin J.E."/>
            <person name="Pohl T.M."/>
            <person name="Prydz H."/>
            <person name="Purnelle B."/>
            <person name="Rasmussen S.W."/>
            <person name="Remacha M.A."/>
            <person name="Revuelta J.L."/>
            <person name="Rieger M."/>
            <person name="Salom D."/>
            <person name="Saluz H.P."/>
            <person name="Saiz J.E."/>
            <person name="Saren A.-M."/>
            <person name="Schaefer M."/>
            <person name="Scharfe M."/>
            <person name="Schmidt E.R."/>
            <person name="Schneider C."/>
            <person name="Scholler P."/>
            <person name="Schwarz S."/>
            <person name="Soler-Mira A."/>
            <person name="Urrestarazu L.A."/>
            <person name="Verhasselt P."/>
            <person name="Vissers S."/>
            <person name="Voet M."/>
            <person name="Volckaert G."/>
            <person name="Wagner G."/>
            <person name="Wambutt R."/>
            <person name="Wedler E."/>
            <person name="Wedler H."/>
            <person name="Woelfl S."/>
            <person name="Harris D.E."/>
            <person name="Bowman S."/>
            <person name="Brown D."/>
            <person name="Churcher C.M."/>
            <person name="Connor R."/>
            <person name="Dedman K."/>
            <person name="Gentles S."/>
            <person name="Hamlin N."/>
            <person name="Hunt S."/>
            <person name="Jones L."/>
            <person name="McDonald S."/>
            <person name="Murphy L.D."/>
            <person name="Niblett D."/>
            <person name="Odell C."/>
            <person name="Oliver K."/>
            <person name="Rajandream M.A."/>
            <person name="Richards C."/>
            <person name="Shore L."/>
            <person name="Walsh S.V."/>
            <person name="Barrell B.G."/>
            <person name="Dietrich F.S."/>
            <person name="Mulligan J.T."/>
            <person name="Allen E."/>
            <person name="Araujo R."/>
            <person name="Aviles E."/>
            <person name="Berno A."/>
            <person name="Carpenter J."/>
            <person name="Chen E."/>
            <person name="Cherry J.M."/>
            <person name="Chung E."/>
            <person name="Duncan M."/>
            <person name="Hunicke-Smith S."/>
            <person name="Hyman R.W."/>
            <person name="Komp C."/>
            <person name="Lashkari D."/>
            <person name="Lew H."/>
            <person name="Lin D."/>
            <person name="Mosedale D."/>
            <person name="Nakahara K."/>
            <person name="Namath A."/>
            <person name="Oefner P."/>
            <person name="Oh C."/>
            <person name="Petel F.X."/>
            <person name="Roberts D."/>
            <person name="Schramm S."/>
            <person name="Schroeder M."/>
            <person name="Shogren T."/>
            <person name="Shroff N."/>
            <person name="Winant A."/>
            <person name="Yelton M.A."/>
            <person name="Botstein D."/>
            <person name="Davis R.W."/>
            <person name="Johnston M."/>
            <person name="Andrews S."/>
            <person name="Brinkman R."/>
            <person name="Cooper J."/>
            <person name="Ding H."/>
            <person name="Du Z."/>
            <person name="Favello A."/>
            <person name="Fulton L."/>
            <person name="Gattung S."/>
            <person name="Greco T."/>
            <person name="Hallsworth K."/>
            <person name="Hawkins J."/>
            <person name="Hillier L.W."/>
            <person name="Jier M."/>
            <person name="Johnson D."/>
            <person name="Johnston L."/>
            <person name="Kirsten J."/>
            <person name="Kucaba T."/>
            <person name="Langston Y."/>
            <person name="Latreille P."/>
            <person name="Le T."/>
            <person name="Mardis E."/>
            <person name="Menezes S."/>
            <person name="Miller N."/>
            <person name="Nhan M."/>
            <person name="Pauley A."/>
            <person name="Peluso D."/>
            <person name="Rifkin L."/>
            <person name="Riles L."/>
            <person name="Taich A."/>
            <person name="Trevaskis E."/>
            <person name="Vignati D."/>
            <person name="Wilcox L."/>
            <person name="Wohldman P."/>
            <person name="Vaudin M."/>
            <person name="Wilson R."/>
            <person name="Waterston R."/>
            <person name="Albermann K."/>
            <person name="Hani J."/>
            <person name="Heumann K."/>
            <person name="Kleine K."/>
            <person name="Mewes H.-W."/>
            <person name="Zollner A."/>
            <person name="Zaccaria P."/>
        </authorList>
    </citation>
    <scope>NUCLEOTIDE SEQUENCE [LARGE SCALE GENOMIC DNA]</scope>
    <source>
        <strain>ATCC 204508 / S288c</strain>
    </source>
</reference>
<reference key="3">
    <citation type="journal article" date="2014" name="G3 (Bethesda)">
        <title>The reference genome sequence of Saccharomyces cerevisiae: Then and now.</title>
        <authorList>
            <person name="Engel S.R."/>
            <person name="Dietrich F.S."/>
            <person name="Fisk D.G."/>
            <person name="Binkley G."/>
            <person name="Balakrishnan R."/>
            <person name="Costanzo M.C."/>
            <person name="Dwight S.S."/>
            <person name="Hitz B.C."/>
            <person name="Karra K."/>
            <person name="Nash R.S."/>
            <person name="Weng S."/>
            <person name="Wong E.D."/>
            <person name="Lloyd P."/>
            <person name="Skrzypek M.S."/>
            <person name="Miyasato S.R."/>
            <person name="Simison M."/>
            <person name="Cherry J.M."/>
        </authorList>
    </citation>
    <scope>GENOME REANNOTATION</scope>
    <source>
        <strain>ATCC 204508 / S288c</strain>
    </source>
</reference>
<reference key="4">
    <citation type="journal article" date="1996" name="J. Biol. Chem.">
        <title>The yeast cadmium factor protein (YCF1) is a vacuolar glutathione S-conjugate pump.</title>
        <authorList>
            <person name="Li Z.S."/>
            <person name="Szczypka M."/>
            <person name="Lu Y.P."/>
            <person name="Thiele D.J."/>
            <person name="Rea P.A."/>
        </authorList>
    </citation>
    <scope>FUNCTION</scope>
    <scope>CATALYTIC ACTIVITY</scope>
    <scope>SUBCELLULAR LOCATION</scope>
</reference>
<reference key="5">
    <citation type="journal article" date="2000" name="Yeast">
        <title>The products of YCF1 and YLL015w (BPT1) cooperate for the ATP-dependent vacuolar transport of unconjugated bilirubin in Saccharomyces cerevisiae.</title>
        <authorList>
            <person name="Petrovic S."/>
            <person name="Pascolo L."/>
            <person name="Gallo R."/>
            <person name="Cupelli F."/>
            <person name="Ostrow J.D."/>
            <person name="Goffeau A."/>
            <person name="Tiribelli C."/>
            <person name="Bruschi C.V."/>
        </authorList>
    </citation>
    <scope>FUNCTION</scope>
</reference>
<reference key="6">
    <citation type="journal article" date="2003" name="Nature">
        <title>Global analysis of protein expression in yeast.</title>
        <authorList>
            <person name="Ghaemmaghami S."/>
            <person name="Huh W.-K."/>
            <person name="Bower K."/>
            <person name="Howson R.W."/>
            <person name="Belle A."/>
            <person name="Dephoure N."/>
            <person name="O'Shea E.K."/>
            <person name="Weissman J.S."/>
        </authorList>
    </citation>
    <scope>LEVEL OF PROTEIN EXPRESSION [LARGE SCALE ANALYSIS]</scope>
</reference>
<reference key="7">
    <citation type="journal article" date="2005" name="Mol. Cell. Proteomics">
        <title>Quantitative phosphoproteomics applied to the yeast pheromone signaling pathway.</title>
        <authorList>
            <person name="Gruhler A."/>
            <person name="Olsen J.V."/>
            <person name="Mohammed S."/>
            <person name="Mortensen P."/>
            <person name="Faergeman N.J."/>
            <person name="Mann M."/>
            <person name="Jensen O.N."/>
        </authorList>
    </citation>
    <scope>PHOSPHORYLATION [LARGE SCALE ANALYSIS] AT SER-903</scope>
    <scope>IDENTIFICATION BY MASS SPECTROMETRY [LARGE SCALE ANALYSIS]</scope>
    <source>
        <strain>YAL6B</strain>
    </source>
</reference>
<reference key="8">
    <citation type="journal article" date="2006" name="Proc. Natl. Acad. Sci. U.S.A.">
        <title>A global topology map of the Saccharomyces cerevisiae membrane proteome.</title>
        <authorList>
            <person name="Kim H."/>
            <person name="Melen K."/>
            <person name="Oesterberg M."/>
            <person name="von Heijne G."/>
        </authorList>
    </citation>
    <scope>TOPOLOGY [LARGE SCALE ANALYSIS]</scope>
    <source>
        <strain>ATCC 208353 / W303-1A</strain>
    </source>
</reference>
<reference key="9">
    <citation type="journal article" date="2007" name="J. Proteome Res.">
        <title>Large-scale phosphorylation analysis of alpha-factor-arrested Saccharomyces cerevisiae.</title>
        <authorList>
            <person name="Li X."/>
            <person name="Gerber S.A."/>
            <person name="Rudner A.D."/>
            <person name="Beausoleil S.A."/>
            <person name="Haas W."/>
            <person name="Villen J."/>
            <person name="Elias J.E."/>
            <person name="Gygi S.P."/>
        </authorList>
    </citation>
    <scope>PHOSPHORYLATION [LARGE SCALE ANALYSIS] AT SER-903; SER-908 AND THR-911</scope>
    <scope>IDENTIFICATION BY MASS SPECTROMETRY [LARGE SCALE ANALYSIS]</scope>
    <source>
        <strain>ADR376</strain>
    </source>
</reference>
<reference key="10">
    <citation type="journal article" date="2007" name="Proc. Natl. Acad. Sci. U.S.A.">
        <title>Analysis of phosphorylation sites on proteins from Saccharomyces cerevisiae by electron transfer dissociation (ETD) mass spectrometry.</title>
        <authorList>
            <person name="Chi A."/>
            <person name="Huttenhower C."/>
            <person name="Geer L.Y."/>
            <person name="Coon J.J."/>
            <person name="Syka J.E.P."/>
            <person name="Bai D.L."/>
            <person name="Shabanowitz J."/>
            <person name="Burke D.J."/>
            <person name="Troyanskaya O.G."/>
            <person name="Hunt D.F."/>
        </authorList>
    </citation>
    <scope>IDENTIFICATION BY MASS SPECTROMETRY [LARGE SCALE ANALYSIS]</scope>
</reference>
<reference key="11">
    <citation type="journal article" date="2008" name="Mol. Cell. Proteomics">
        <title>A multidimensional chromatography technology for in-depth phosphoproteome analysis.</title>
        <authorList>
            <person name="Albuquerque C.P."/>
            <person name="Smolka M.B."/>
            <person name="Payne S.H."/>
            <person name="Bafna V."/>
            <person name="Eng J."/>
            <person name="Zhou H."/>
        </authorList>
    </citation>
    <scope>PHOSPHORYLATION [LARGE SCALE ANALYSIS] AT SER-903 AND SER-914</scope>
    <scope>IDENTIFICATION BY MASS SPECTROMETRY [LARGE SCALE ANALYSIS]</scope>
</reference>
<reference key="12">
    <citation type="journal article" date="2009" name="Science">
        <title>Global analysis of Cdk1 substrate phosphorylation sites provides insights into evolution.</title>
        <authorList>
            <person name="Holt L.J."/>
            <person name="Tuch B.B."/>
            <person name="Villen J."/>
            <person name="Johnson A.D."/>
            <person name="Gygi S.P."/>
            <person name="Morgan D.O."/>
        </authorList>
    </citation>
    <scope>PHOSPHORYLATION [LARGE SCALE ANALYSIS] AT SER-251; SER-873; SER-903 AND SER-908</scope>
    <scope>IDENTIFICATION BY MASS SPECTROMETRY [LARGE SCALE ANALYSIS]</scope>
</reference>
<feature type="chain" id="PRO_0000093449" description="Metal resistance protein YCF1">
    <location>
        <begin position="1"/>
        <end position="1515"/>
    </location>
</feature>
<feature type="topological domain" description="Vacuolar" evidence="1">
    <location>
        <begin position="1"/>
        <end position="32"/>
    </location>
</feature>
<feature type="transmembrane region" description="Helical; Name=1" evidence="3">
    <location>
        <begin position="33"/>
        <end position="53"/>
    </location>
</feature>
<feature type="topological domain" description="Cytoplasmic" evidence="1">
    <location>
        <begin position="54"/>
        <end position="73"/>
    </location>
</feature>
<feature type="transmembrane region" description="Helical; Name=2" evidence="3">
    <location>
        <begin position="74"/>
        <end position="94"/>
    </location>
</feature>
<feature type="topological domain" description="Vacuolar" evidence="1">
    <location>
        <begin position="95"/>
        <end position="99"/>
    </location>
</feature>
<feature type="transmembrane region" description="Helical; Name=3" evidence="3">
    <location>
        <begin position="100"/>
        <end position="120"/>
    </location>
</feature>
<feature type="topological domain" description="Cytoplasmic" evidence="1">
    <location>
        <begin position="121"/>
        <end position="130"/>
    </location>
</feature>
<feature type="transmembrane region" description="Helical; Name=4" evidence="3">
    <location>
        <begin position="131"/>
        <end position="151"/>
    </location>
</feature>
<feature type="topological domain" description="Vacuolar" evidence="1">
    <location>
        <begin position="152"/>
        <end position="169"/>
    </location>
</feature>
<feature type="transmembrane region" description="Helical; Name=5" evidence="3">
    <location>
        <begin position="170"/>
        <end position="190"/>
    </location>
</feature>
<feature type="topological domain" description="Cytoplasmic" evidence="1">
    <location>
        <begin position="191"/>
        <end position="278"/>
    </location>
</feature>
<feature type="transmembrane region" description="Helical; Name=6" evidence="3">
    <location>
        <begin position="279"/>
        <end position="299"/>
    </location>
</feature>
<feature type="topological domain" description="Vacuolar" evidence="1">
    <location>
        <begin position="300"/>
        <end position="345"/>
    </location>
</feature>
<feature type="transmembrane region" description="Helical; Name=7" evidence="3">
    <location>
        <begin position="346"/>
        <end position="366"/>
    </location>
</feature>
<feature type="topological domain" description="Cytoplasmic" evidence="1">
    <location>
        <begin position="367"/>
        <end position="422"/>
    </location>
</feature>
<feature type="transmembrane region" description="Helical; Name=8" evidence="3">
    <location>
        <begin position="423"/>
        <end position="443"/>
    </location>
</feature>
<feature type="topological domain" description="Vacuolar" evidence="1">
    <location>
        <begin position="444"/>
        <end position="446"/>
    </location>
</feature>
<feature type="transmembrane region" description="Helical; Name=9" evidence="3">
    <location>
        <begin position="447"/>
        <end position="467"/>
    </location>
</feature>
<feature type="topological domain" description="Cytoplasmic" evidence="1">
    <location>
        <begin position="468"/>
        <end position="530"/>
    </location>
</feature>
<feature type="transmembrane region" description="Helical; Name=10" evidence="3">
    <location>
        <begin position="531"/>
        <end position="551"/>
    </location>
</feature>
<feature type="topological domain" description="Vacuolar" evidence="1">
    <location>
        <begin position="552"/>
        <end position="572"/>
    </location>
</feature>
<feature type="transmembrane region" description="Helical; Name=11" evidence="3">
    <location>
        <begin position="573"/>
        <end position="593"/>
    </location>
</feature>
<feature type="topological domain" description="Cytoplasmic" evidence="1">
    <location>
        <begin position="594"/>
        <end position="943"/>
    </location>
</feature>
<feature type="transmembrane region" description="Helical; Name=12" evidence="3">
    <location>
        <begin position="944"/>
        <end position="964"/>
    </location>
</feature>
<feature type="topological domain" description="Vacuolar" evidence="1">
    <location>
        <begin position="965"/>
        <end position="1001"/>
    </location>
</feature>
<feature type="transmembrane region" description="Helical; Name=13" evidence="3">
    <location>
        <begin position="1002"/>
        <end position="1023"/>
    </location>
</feature>
<feature type="topological domain" description="Cytoplasmic" evidence="1">
    <location>
        <begin position="1024"/>
        <end position="1066"/>
    </location>
</feature>
<feature type="transmembrane region" description="Helical; Name=14" evidence="3">
    <location>
        <begin position="1067"/>
        <end position="1087"/>
    </location>
</feature>
<feature type="topological domain" description="Vacuolar" evidence="1">
    <location>
        <position position="1088"/>
    </location>
</feature>
<feature type="transmembrane region" description="Helical; Name=15" evidence="3">
    <location>
        <begin position="1089"/>
        <end position="1109"/>
    </location>
</feature>
<feature type="topological domain" description="Cytoplasmic" evidence="1">
    <location>
        <begin position="1110"/>
        <end position="1180"/>
    </location>
</feature>
<feature type="transmembrane region" description="Helical; Name=16" evidence="3">
    <location>
        <begin position="1181"/>
        <end position="1201"/>
    </location>
</feature>
<feature type="topological domain" description="Vacuolar" evidence="1">
    <location>
        <begin position="1202"/>
        <end position="1205"/>
    </location>
</feature>
<feature type="transmembrane region" description="Helical; Name=17" evidence="3">
    <location>
        <begin position="1206"/>
        <end position="1226"/>
    </location>
</feature>
<feature type="topological domain" description="Cytoplasmic" evidence="1">
    <location>
        <begin position="1227"/>
        <end position="1515"/>
    </location>
</feature>
<feature type="domain" description="ABC transmembrane type-1 1" evidence="3">
    <location>
        <begin position="287"/>
        <end position="590"/>
    </location>
</feature>
<feature type="domain" description="ABC transporter 1" evidence="2">
    <location>
        <begin position="626"/>
        <end position="853"/>
    </location>
</feature>
<feature type="domain" description="ABC transmembrane type-1 2" evidence="3">
    <location>
        <begin position="951"/>
        <end position="1235"/>
    </location>
</feature>
<feature type="domain" description="ABC transporter 2" evidence="2">
    <location>
        <begin position="1272"/>
        <end position="1507"/>
    </location>
</feature>
<feature type="binding site" evidence="2">
    <location>
        <begin position="663"/>
        <end position="670"/>
    </location>
    <ligand>
        <name>ATP</name>
        <dbReference type="ChEBI" id="CHEBI:30616"/>
        <label>1</label>
    </ligand>
</feature>
<feature type="binding site" evidence="2">
    <location>
        <begin position="1306"/>
        <end position="1313"/>
    </location>
    <ligand>
        <name>ATP</name>
        <dbReference type="ChEBI" id="CHEBI:30616"/>
        <label>2</label>
    </ligand>
</feature>
<feature type="modified residue" description="Phosphoserine" evidence="12">
    <location>
        <position position="251"/>
    </location>
</feature>
<feature type="modified residue" description="Phosphoserine" evidence="12">
    <location>
        <position position="873"/>
    </location>
</feature>
<feature type="modified residue" description="Phosphoserine" evidence="9 10 11 12">
    <location>
        <position position="903"/>
    </location>
</feature>
<feature type="modified residue" description="Phosphoserine" evidence="10 12">
    <location>
        <position position="908"/>
    </location>
</feature>
<feature type="modified residue" description="Phosphothreonine" evidence="10">
    <location>
        <position position="911"/>
    </location>
</feature>
<feature type="modified residue" description="Phosphoserine" evidence="11">
    <location>
        <position position="914"/>
    </location>
</feature>
<feature type="mutagenesis site" description="Loss of function." evidence="6">
    <location>
        <position position="713"/>
    </location>
</feature>
<feature type="mutagenesis site" description="Loss of function." evidence="6">
    <original>S</original>
    <variation>A</variation>
    <location>
        <position position="908"/>
    </location>
</feature>
<feature type="sequence conflict" description="In Ref. 1; AAA50353." evidence="8" ref="1">
    <original>L</original>
    <variation>R</variation>
    <location>
        <position position="680"/>
    </location>
</feature>
<feature type="helix" evidence="15">
    <location>
        <begin position="5"/>
        <end position="12"/>
    </location>
</feature>
<feature type="strand" evidence="14">
    <location>
        <begin position="15"/>
        <end position="17"/>
    </location>
</feature>
<feature type="strand" evidence="13">
    <location>
        <begin position="20"/>
        <end position="22"/>
    </location>
</feature>
<feature type="strand" evidence="15">
    <location>
        <begin position="26"/>
        <end position="28"/>
    </location>
</feature>
<feature type="helix" evidence="15">
    <location>
        <begin position="30"/>
        <end position="35"/>
    </location>
</feature>
<feature type="helix" evidence="15">
    <location>
        <begin position="37"/>
        <end position="57"/>
    </location>
</feature>
<feature type="turn" evidence="13">
    <location>
        <begin position="60"/>
        <end position="62"/>
    </location>
</feature>
<feature type="helix" evidence="15">
    <location>
        <begin position="70"/>
        <end position="91"/>
    </location>
</feature>
<feature type="helix" evidence="15">
    <location>
        <begin position="95"/>
        <end position="99"/>
    </location>
</feature>
<feature type="helix" evidence="15">
    <location>
        <begin position="101"/>
        <end position="127"/>
    </location>
</feature>
<feature type="helix" evidence="15">
    <location>
        <begin position="133"/>
        <end position="160"/>
    </location>
</feature>
<feature type="helix" evidence="15">
    <location>
        <begin position="167"/>
        <end position="188"/>
    </location>
</feature>
<feature type="helix" evidence="15">
    <location>
        <begin position="196"/>
        <end position="201"/>
    </location>
</feature>
<feature type="helix" evidence="15">
    <location>
        <begin position="211"/>
        <end position="214"/>
    </location>
</feature>
<feature type="helix" evidence="15">
    <location>
        <begin position="217"/>
        <end position="222"/>
    </location>
</feature>
<feature type="helix" evidence="15">
    <location>
        <begin position="224"/>
        <end position="226"/>
    </location>
</feature>
<feature type="helix" evidence="15">
    <location>
        <begin position="227"/>
        <end position="235"/>
    </location>
</feature>
<feature type="turn" evidence="15">
    <location>
        <begin position="240"/>
        <end position="242"/>
    </location>
</feature>
<feature type="helix" evidence="16">
    <location>
        <begin position="248"/>
        <end position="250"/>
    </location>
</feature>
<feature type="helix" evidence="15">
    <location>
        <begin position="252"/>
        <end position="269"/>
    </location>
</feature>
<feature type="strand" evidence="14">
    <location>
        <begin position="270"/>
        <end position="272"/>
    </location>
</feature>
<feature type="helix" evidence="15">
    <location>
        <begin position="275"/>
        <end position="326"/>
    </location>
</feature>
<feature type="turn" evidence="17">
    <location>
        <begin position="327"/>
        <end position="330"/>
    </location>
</feature>
<feature type="helix" evidence="15">
    <location>
        <begin position="343"/>
        <end position="391"/>
    </location>
</feature>
<feature type="helix" evidence="15">
    <location>
        <begin position="394"/>
        <end position="398"/>
    </location>
</feature>
<feature type="helix" evidence="15">
    <location>
        <begin position="402"/>
        <end position="410"/>
    </location>
</feature>
<feature type="helix" evidence="15">
    <location>
        <begin position="412"/>
        <end position="423"/>
    </location>
</feature>
<feature type="helix" evidence="15">
    <location>
        <begin position="425"/>
        <end position="444"/>
    </location>
</feature>
<feature type="helix" evidence="15">
    <location>
        <begin position="445"/>
        <end position="447"/>
    </location>
</feature>
<feature type="helix" evidence="15">
    <location>
        <begin position="448"/>
        <end position="492"/>
    </location>
</feature>
<feature type="helix" evidence="15">
    <location>
        <begin position="494"/>
        <end position="500"/>
    </location>
</feature>
<feature type="helix" evidence="15">
    <location>
        <begin position="503"/>
        <end position="516"/>
    </location>
</feature>
<feature type="helix" evidence="15">
    <location>
        <begin position="518"/>
        <end position="554"/>
    </location>
</feature>
<feature type="helix" evidence="15">
    <location>
        <begin position="561"/>
        <end position="578"/>
    </location>
</feature>
<feature type="helix" evidence="15">
    <location>
        <begin position="581"/>
        <end position="602"/>
    </location>
</feature>
<feature type="strand" evidence="15">
    <location>
        <begin position="611"/>
        <end position="615"/>
    </location>
</feature>
<feature type="strand" evidence="16">
    <location>
        <begin position="620"/>
        <end position="622"/>
    </location>
</feature>
<feature type="strand" evidence="15">
    <location>
        <begin position="623"/>
        <end position="637"/>
    </location>
</feature>
<feature type="strand" evidence="15">
    <location>
        <begin position="639"/>
        <end position="641"/>
    </location>
</feature>
<feature type="strand" evidence="15">
    <location>
        <begin position="643"/>
        <end position="654"/>
    </location>
</feature>
<feature type="strand" evidence="15">
    <location>
        <begin position="659"/>
        <end position="662"/>
    </location>
</feature>
<feature type="turn" evidence="15">
    <location>
        <begin position="665"/>
        <end position="668"/>
    </location>
</feature>
<feature type="helix" evidence="15">
    <location>
        <begin position="669"/>
        <end position="676"/>
    </location>
</feature>
<feature type="strand" evidence="15">
    <location>
        <begin position="680"/>
        <end position="691"/>
    </location>
</feature>
<feature type="strand" evidence="15">
    <location>
        <begin position="693"/>
        <end position="696"/>
    </location>
</feature>
<feature type="strand" evidence="15">
    <location>
        <begin position="704"/>
        <end position="706"/>
    </location>
</feature>
<feature type="helix" evidence="15">
    <location>
        <begin position="707"/>
        <end position="712"/>
    </location>
</feature>
<feature type="helix" evidence="15">
    <location>
        <begin position="719"/>
        <end position="728"/>
    </location>
</feature>
<feature type="turn" evidence="16">
    <location>
        <begin position="729"/>
        <end position="731"/>
    </location>
</feature>
<feature type="helix" evidence="15">
    <location>
        <begin position="732"/>
        <end position="737"/>
    </location>
</feature>
<feature type="strand" evidence="14">
    <location>
        <begin position="738"/>
        <end position="740"/>
    </location>
</feature>
<feature type="helix" evidence="15">
    <location>
        <begin position="741"/>
        <end position="743"/>
    </location>
</feature>
<feature type="strand" evidence="15">
    <location>
        <begin position="745"/>
        <end position="751"/>
    </location>
</feature>
<feature type="helix" evidence="15">
    <location>
        <begin position="755"/>
        <end position="769"/>
    </location>
</feature>
<feature type="strand" evidence="15">
    <location>
        <begin position="772"/>
        <end position="778"/>
    </location>
</feature>
<feature type="helix" evidence="15">
    <location>
        <begin position="779"/>
        <end position="782"/>
    </location>
</feature>
<feature type="helix" evidence="15">
    <location>
        <begin position="785"/>
        <end position="794"/>
    </location>
</feature>
<feature type="helix" evidence="15">
    <location>
        <begin position="801"/>
        <end position="804"/>
    </location>
</feature>
<feature type="strand" evidence="15">
    <location>
        <begin position="805"/>
        <end position="810"/>
    </location>
</feature>
<feature type="helix" evidence="15">
    <location>
        <begin position="814"/>
        <end position="818"/>
    </location>
</feature>
<feature type="strand" evidence="15">
    <location>
        <begin position="821"/>
        <end position="827"/>
    </location>
</feature>
<feature type="strand" evidence="15">
    <location>
        <begin position="830"/>
        <end position="835"/>
    </location>
</feature>
<feature type="helix" evidence="15">
    <location>
        <begin position="837"/>
        <end position="841"/>
    </location>
</feature>
<feature type="turn" evidence="14">
    <location>
        <begin position="842"/>
        <end position="844"/>
    </location>
</feature>
<feature type="helix" evidence="15">
    <location>
        <begin position="847"/>
        <end position="853"/>
    </location>
</feature>
<feature type="helix" evidence="17">
    <location>
        <begin position="883"/>
        <end position="888"/>
    </location>
</feature>
<feature type="strand" evidence="15">
    <location>
        <begin position="898"/>
        <end position="900"/>
    </location>
</feature>
<feature type="helix" evidence="15">
    <location>
        <begin position="901"/>
        <end position="912"/>
    </location>
</feature>
<feature type="helix" evidence="15">
    <location>
        <begin position="924"/>
        <end position="928"/>
    </location>
</feature>
<feature type="helix" evidence="15">
    <location>
        <begin position="936"/>
        <end position="945"/>
    </location>
</feature>
<feature type="helix" evidence="15">
    <location>
        <begin position="948"/>
        <end position="982"/>
    </location>
</feature>
<feature type="helix" evidence="15">
    <location>
        <begin position="988"/>
        <end position="1015"/>
    </location>
</feature>
<feature type="helix" evidence="15">
    <location>
        <begin position="1018"/>
        <end position="1034"/>
    </location>
</feature>
<feature type="helix" evidence="15">
    <location>
        <begin position="1038"/>
        <end position="1043"/>
    </location>
</feature>
<feature type="helix" evidence="15">
    <location>
        <begin position="1046"/>
        <end position="1062"/>
    </location>
</feature>
<feature type="helix" evidence="15">
    <location>
        <begin position="1064"/>
        <end position="1088"/>
    </location>
</feature>
<feature type="helix" evidence="15">
    <location>
        <begin position="1090"/>
        <end position="1092"/>
    </location>
</feature>
<feature type="helix" evidence="15">
    <location>
        <begin position="1093"/>
        <end position="1136"/>
    </location>
</feature>
<feature type="helix" evidence="15">
    <location>
        <begin position="1139"/>
        <end position="1145"/>
    </location>
</feature>
<feature type="helix" evidence="15">
    <location>
        <begin position="1148"/>
        <end position="1201"/>
    </location>
</feature>
<feature type="helix" evidence="15">
    <location>
        <begin position="1206"/>
        <end position="1217"/>
    </location>
</feature>
<feature type="helix" evidence="15">
    <location>
        <begin position="1219"/>
        <end position="1236"/>
    </location>
</feature>
<feature type="helix" evidence="15">
    <location>
        <begin position="1238"/>
        <end position="1247"/>
    </location>
</feature>
<feature type="helix" evidence="15">
    <location>
        <begin position="1258"/>
        <end position="1260"/>
    </location>
</feature>
<feature type="strand" evidence="15">
    <location>
        <begin position="1267"/>
        <end position="1269"/>
    </location>
</feature>
<feature type="strand" evidence="15">
    <location>
        <begin position="1272"/>
        <end position="1282"/>
    </location>
</feature>
<feature type="strand" evidence="15">
    <location>
        <begin position="1287"/>
        <end position="1296"/>
    </location>
</feature>
<feature type="strand" evidence="15">
    <location>
        <begin position="1301"/>
        <end position="1305"/>
    </location>
</feature>
<feature type="strand" evidence="14">
    <location>
        <begin position="1308"/>
        <end position="1311"/>
    </location>
</feature>
<feature type="helix" evidence="15">
    <location>
        <begin position="1314"/>
        <end position="1319"/>
    </location>
</feature>
<feature type="strand" evidence="15">
    <location>
        <begin position="1326"/>
        <end position="1332"/>
    </location>
</feature>
<feature type="strand" evidence="15">
    <location>
        <begin position="1335"/>
        <end position="1340"/>
    </location>
</feature>
<feature type="helix" evidence="15">
    <location>
        <begin position="1342"/>
        <end position="1346"/>
    </location>
</feature>
<feature type="strand" evidence="15">
    <location>
        <begin position="1350"/>
        <end position="1352"/>
    </location>
</feature>
<feature type="strand" evidence="15">
    <location>
        <begin position="1360"/>
        <end position="1362"/>
    </location>
</feature>
<feature type="helix" evidence="15">
    <location>
        <begin position="1363"/>
        <end position="1367"/>
    </location>
</feature>
<feature type="helix" evidence="15">
    <location>
        <begin position="1375"/>
        <end position="1384"/>
    </location>
</feature>
<feature type="helix" evidence="15">
    <location>
        <begin position="1388"/>
        <end position="1394"/>
    </location>
</feature>
<feature type="helix" evidence="15">
    <location>
        <begin position="1398"/>
        <end position="1400"/>
    </location>
</feature>
<feature type="helix" evidence="15">
    <location>
        <begin position="1405"/>
        <end position="1407"/>
    </location>
</feature>
<feature type="helix" evidence="15">
    <location>
        <begin position="1412"/>
        <end position="1425"/>
    </location>
</feature>
<feature type="strand" evidence="15">
    <location>
        <begin position="1429"/>
        <end position="1434"/>
    </location>
</feature>
<feature type="turn" evidence="13">
    <location>
        <begin position="1436"/>
        <end position="1439"/>
    </location>
</feature>
<feature type="helix" evidence="15">
    <location>
        <begin position="1443"/>
        <end position="1454"/>
    </location>
</feature>
<feature type="turn" evidence="15">
    <location>
        <begin position="1455"/>
        <end position="1458"/>
    </location>
</feature>
<feature type="strand" evidence="15">
    <location>
        <begin position="1459"/>
        <end position="1464"/>
    </location>
</feature>
<feature type="helix" evidence="15">
    <location>
        <begin position="1468"/>
        <end position="1470"/>
    </location>
</feature>
<feature type="turn" evidence="17">
    <location>
        <begin position="1471"/>
        <end position="1473"/>
    </location>
</feature>
<feature type="strand" evidence="15">
    <location>
        <begin position="1475"/>
        <end position="1481"/>
    </location>
</feature>
<feature type="strand" evidence="15">
    <location>
        <begin position="1484"/>
        <end position="1489"/>
    </location>
</feature>
<feature type="helix" evidence="15">
    <location>
        <begin position="1491"/>
        <end position="1496"/>
    </location>
</feature>
<feature type="helix" evidence="15">
    <location>
        <begin position="1501"/>
        <end position="1508"/>
    </location>
</feature>
<feature type="helix" evidence="17">
    <location>
        <begin position="1511"/>
        <end position="1514"/>
    </location>
</feature>